<feature type="chain" id="PRO_1000025265" description="Co-chaperonin GroES">
    <location>
        <begin position="1"/>
        <end position="95"/>
    </location>
</feature>
<name>CH10_GEOMG</name>
<protein>
    <recommendedName>
        <fullName evidence="1">Co-chaperonin GroES</fullName>
    </recommendedName>
    <alternativeName>
        <fullName evidence="1">10 kDa chaperonin</fullName>
    </alternativeName>
    <alternativeName>
        <fullName evidence="1">Chaperonin-10</fullName>
        <shortName evidence="1">Cpn10</shortName>
    </alternativeName>
</protein>
<dbReference type="EMBL" id="CP000148">
    <property type="protein sequence ID" value="ABB30278.1"/>
    <property type="molecule type" value="Genomic_DNA"/>
</dbReference>
<dbReference type="RefSeq" id="WP_004513794.1">
    <property type="nucleotide sequence ID" value="NC_007517.1"/>
</dbReference>
<dbReference type="SMR" id="Q39ZP6"/>
<dbReference type="STRING" id="269799.Gmet_0028"/>
<dbReference type="KEGG" id="gme:Gmet_0028"/>
<dbReference type="eggNOG" id="COG0234">
    <property type="taxonomic scope" value="Bacteria"/>
</dbReference>
<dbReference type="HOGENOM" id="CLU_132825_2_0_7"/>
<dbReference type="Proteomes" id="UP000007073">
    <property type="component" value="Chromosome"/>
</dbReference>
<dbReference type="GO" id="GO:0005737">
    <property type="term" value="C:cytoplasm"/>
    <property type="evidence" value="ECO:0007669"/>
    <property type="project" value="UniProtKB-SubCell"/>
</dbReference>
<dbReference type="GO" id="GO:0005524">
    <property type="term" value="F:ATP binding"/>
    <property type="evidence" value="ECO:0007669"/>
    <property type="project" value="InterPro"/>
</dbReference>
<dbReference type="GO" id="GO:0046872">
    <property type="term" value="F:metal ion binding"/>
    <property type="evidence" value="ECO:0007669"/>
    <property type="project" value="TreeGrafter"/>
</dbReference>
<dbReference type="GO" id="GO:0044183">
    <property type="term" value="F:protein folding chaperone"/>
    <property type="evidence" value="ECO:0007669"/>
    <property type="project" value="InterPro"/>
</dbReference>
<dbReference type="GO" id="GO:0051087">
    <property type="term" value="F:protein-folding chaperone binding"/>
    <property type="evidence" value="ECO:0007669"/>
    <property type="project" value="TreeGrafter"/>
</dbReference>
<dbReference type="GO" id="GO:0051082">
    <property type="term" value="F:unfolded protein binding"/>
    <property type="evidence" value="ECO:0007669"/>
    <property type="project" value="TreeGrafter"/>
</dbReference>
<dbReference type="GO" id="GO:0051085">
    <property type="term" value="P:chaperone cofactor-dependent protein refolding"/>
    <property type="evidence" value="ECO:0007669"/>
    <property type="project" value="TreeGrafter"/>
</dbReference>
<dbReference type="CDD" id="cd00320">
    <property type="entry name" value="cpn10"/>
    <property type="match status" value="1"/>
</dbReference>
<dbReference type="FunFam" id="2.30.33.40:FF:000001">
    <property type="entry name" value="10 kDa chaperonin"/>
    <property type="match status" value="1"/>
</dbReference>
<dbReference type="Gene3D" id="2.30.33.40">
    <property type="entry name" value="GroES chaperonin"/>
    <property type="match status" value="1"/>
</dbReference>
<dbReference type="HAMAP" id="MF_00580">
    <property type="entry name" value="CH10"/>
    <property type="match status" value="1"/>
</dbReference>
<dbReference type="InterPro" id="IPR020818">
    <property type="entry name" value="Chaperonin_GroES"/>
</dbReference>
<dbReference type="InterPro" id="IPR037124">
    <property type="entry name" value="Chaperonin_GroES_sf"/>
</dbReference>
<dbReference type="InterPro" id="IPR018369">
    <property type="entry name" value="Chaprnonin_Cpn10_CS"/>
</dbReference>
<dbReference type="InterPro" id="IPR011032">
    <property type="entry name" value="GroES-like_sf"/>
</dbReference>
<dbReference type="NCBIfam" id="NF001527">
    <property type="entry name" value="PRK00364.1-2"/>
    <property type="match status" value="1"/>
</dbReference>
<dbReference type="NCBIfam" id="NF001529">
    <property type="entry name" value="PRK00364.1-5"/>
    <property type="match status" value="1"/>
</dbReference>
<dbReference type="NCBIfam" id="NF001531">
    <property type="entry name" value="PRK00364.2-2"/>
    <property type="match status" value="1"/>
</dbReference>
<dbReference type="NCBIfam" id="NF001533">
    <property type="entry name" value="PRK00364.2-4"/>
    <property type="match status" value="1"/>
</dbReference>
<dbReference type="NCBIfam" id="NF001534">
    <property type="entry name" value="PRK00364.2-5"/>
    <property type="match status" value="1"/>
</dbReference>
<dbReference type="PANTHER" id="PTHR10772">
    <property type="entry name" value="10 KDA HEAT SHOCK PROTEIN"/>
    <property type="match status" value="1"/>
</dbReference>
<dbReference type="PANTHER" id="PTHR10772:SF58">
    <property type="entry name" value="CO-CHAPERONIN GROES"/>
    <property type="match status" value="1"/>
</dbReference>
<dbReference type="Pfam" id="PF00166">
    <property type="entry name" value="Cpn10"/>
    <property type="match status" value="1"/>
</dbReference>
<dbReference type="PRINTS" id="PR00297">
    <property type="entry name" value="CHAPERONIN10"/>
</dbReference>
<dbReference type="SMART" id="SM00883">
    <property type="entry name" value="Cpn10"/>
    <property type="match status" value="1"/>
</dbReference>
<dbReference type="SUPFAM" id="SSF50129">
    <property type="entry name" value="GroES-like"/>
    <property type="match status" value="1"/>
</dbReference>
<dbReference type="PROSITE" id="PS00681">
    <property type="entry name" value="CHAPERONINS_CPN10"/>
    <property type="match status" value="1"/>
</dbReference>
<evidence type="ECO:0000255" key="1">
    <source>
        <dbReference type="HAMAP-Rule" id="MF_00580"/>
    </source>
</evidence>
<sequence>MKLRPLQDRILVKRIEEEQVTAGGIFIPDTAKEKPQRGEIVAVGNGKKTEDGKVIPIDLKVGDKVLFGKYAGTDIKVEGEDFLIMREDDILGVIE</sequence>
<accession>Q39ZP6</accession>
<keyword id="KW-0143">Chaperone</keyword>
<keyword id="KW-0963">Cytoplasm</keyword>
<keyword id="KW-1185">Reference proteome</keyword>
<gene>
    <name evidence="1" type="primary">groES</name>
    <name evidence="1" type="synonym">groS</name>
    <name type="ordered locus">Gmet_0028</name>
</gene>
<proteinExistence type="inferred from homology"/>
<reference key="1">
    <citation type="journal article" date="2009" name="BMC Microbiol.">
        <title>The genome sequence of Geobacter metallireducens: features of metabolism, physiology and regulation common and dissimilar to Geobacter sulfurreducens.</title>
        <authorList>
            <person name="Aklujkar M."/>
            <person name="Krushkal J."/>
            <person name="DiBartolo G."/>
            <person name="Lapidus A."/>
            <person name="Land M.L."/>
            <person name="Lovley D.R."/>
        </authorList>
    </citation>
    <scope>NUCLEOTIDE SEQUENCE [LARGE SCALE GENOMIC DNA]</scope>
    <source>
        <strain>ATCC 53774 / DSM 7210 / GS-15</strain>
    </source>
</reference>
<comment type="function">
    <text evidence="1">Together with the chaperonin GroEL, plays an essential role in assisting protein folding. The GroEL-GroES system forms a nano-cage that allows encapsulation of the non-native substrate proteins and provides a physical environment optimized to promote and accelerate protein folding. GroES binds to the apical surface of the GroEL ring, thereby capping the opening of the GroEL channel.</text>
</comment>
<comment type="subunit">
    <text evidence="1">Heptamer of 7 subunits arranged in a ring. Interacts with the chaperonin GroEL.</text>
</comment>
<comment type="subcellular location">
    <subcellularLocation>
        <location evidence="1">Cytoplasm</location>
    </subcellularLocation>
</comment>
<comment type="similarity">
    <text evidence="1">Belongs to the GroES chaperonin family.</text>
</comment>
<organism>
    <name type="scientific">Geobacter metallireducens (strain ATCC 53774 / DSM 7210 / GS-15)</name>
    <dbReference type="NCBI Taxonomy" id="269799"/>
    <lineage>
        <taxon>Bacteria</taxon>
        <taxon>Pseudomonadati</taxon>
        <taxon>Thermodesulfobacteriota</taxon>
        <taxon>Desulfuromonadia</taxon>
        <taxon>Geobacterales</taxon>
        <taxon>Geobacteraceae</taxon>
        <taxon>Geobacter</taxon>
    </lineage>
</organism>